<keyword id="KW-0067">ATP-binding</keyword>
<keyword id="KW-0903">Direct protein sequencing</keyword>
<keyword id="KW-0289">Folate biosynthesis</keyword>
<keyword id="KW-0418">Kinase</keyword>
<keyword id="KW-0456">Lyase</keyword>
<keyword id="KW-0460">Magnesium</keyword>
<keyword id="KW-0479">Metal-binding</keyword>
<keyword id="KW-0511">Multifunctional enzyme</keyword>
<keyword id="KW-0547">Nucleotide-binding</keyword>
<keyword id="KW-1185">Reference proteome</keyword>
<keyword id="KW-0808">Transferase</keyword>
<protein>
    <recommendedName>
        <fullName>Bifunctional folate synthesis protein</fullName>
    </recommendedName>
    <domain>
        <recommendedName>
            <fullName evidence="6">Dihydroneopterin aldolase</fullName>
            <shortName evidence="6">DHNA</shortName>
            <ecNumber evidence="4">4.1.2.25</ecNumber>
        </recommendedName>
        <alternativeName>
            <fullName>7,8-dihydroneopterin aldolase</fullName>
        </alternativeName>
    </domain>
    <domain>
        <recommendedName>
            <fullName>2-amino-4-hydroxy-6-hydroxymethyldihydropteridine pyrophosphokinase</fullName>
            <ecNumber evidence="3 4">2.7.6.3</ecNumber>
        </recommendedName>
        <alternativeName>
            <fullName evidence="5">6-hydroxymethyl-7,8-dihydropterin pyrophosphokinase</fullName>
            <shortName evidence="5">PPPK</shortName>
        </alternativeName>
        <alternativeName>
            <fullName>7,8-dihydro-6-hydroxymethylpterin pyrophosphokinase</fullName>
            <shortName evidence="6">HPPK</shortName>
        </alternativeName>
    </domain>
</protein>
<evidence type="ECO:0000250" key="1">
    <source>
        <dbReference type="UniProtKB" id="P0AC16"/>
    </source>
</evidence>
<evidence type="ECO:0000250" key="2">
    <source>
        <dbReference type="UniProtKB" id="P26281"/>
    </source>
</evidence>
<evidence type="ECO:0000269" key="3">
    <source>
    </source>
</evidence>
<evidence type="ECO:0000269" key="4">
    <source>
    </source>
</evidence>
<evidence type="ECO:0000303" key="5">
    <source>
    </source>
</evidence>
<evidence type="ECO:0000303" key="6">
    <source>
    </source>
</evidence>
<evidence type="ECO:0000305" key="7"/>
<dbReference type="EC" id="4.1.2.25" evidence="4"/>
<dbReference type="EC" id="2.7.6.3" evidence="3 4"/>
<dbReference type="EMBL" id="U16156">
    <property type="protein sequence ID" value="AAB63947.1"/>
    <property type="molecule type" value="Genomic_DNA"/>
</dbReference>
<dbReference type="EMBL" id="AE005672">
    <property type="protein sequence ID" value="AAK74470.1"/>
    <property type="molecule type" value="Genomic_DNA"/>
</dbReference>
<dbReference type="PIR" id="A36704">
    <property type="entry name" value="A36704"/>
</dbReference>
<dbReference type="PIR" id="E95034">
    <property type="entry name" value="E95034"/>
</dbReference>
<dbReference type="PIR" id="E97905">
    <property type="entry name" value="E97905"/>
</dbReference>
<dbReference type="SMR" id="P22291"/>
<dbReference type="IntAct" id="P22291">
    <property type="interactions" value="1"/>
</dbReference>
<dbReference type="PaxDb" id="170187-SP_0292"/>
<dbReference type="EnsemblBacteria" id="AAK74470">
    <property type="protein sequence ID" value="AAK74470"/>
    <property type="gene ID" value="SP_0292"/>
</dbReference>
<dbReference type="KEGG" id="spn:SP_0292"/>
<dbReference type="eggNOG" id="COG0801">
    <property type="taxonomic scope" value="Bacteria"/>
</dbReference>
<dbReference type="eggNOG" id="COG1539">
    <property type="taxonomic scope" value="Bacteria"/>
</dbReference>
<dbReference type="PhylomeDB" id="P22291"/>
<dbReference type="BioCyc" id="SPNE170187:G1FZB-301-MONOMER"/>
<dbReference type="UniPathway" id="UPA00077">
    <property type="reaction ID" value="UER00154"/>
</dbReference>
<dbReference type="UniPathway" id="UPA00077">
    <property type="reaction ID" value="UER00155"/>
</dbReference>
<dbReference type="Proteomes" id="UP000000585">
    <property type="component" value="Chromosome"/>
</dbReference>
<dbReference type="GO" id="GO:0003848">
    <property type="term" value="F:2-amino-4-hydroxy-6-hydroxymethyldihydropteridine diphosphokinase activity"/>
    <property type="evidence" value="ECO:0007669"/>
    <property type="project" value="UniProtKB-EC"/>
</dbReference>
<dbReference type="GO" id="GO:0005524">
    <property type="term" value="F:ATP binding"/>
    <property type="evidence" value="ECO:0007669"/>
    <property type="project" value="UniProtKB-KW"/>
</dbReference>
<dbReference type="GO" id="GO:0004150">
    <property type="term" value="F:dihydroneopterin aldolase activity"/>
    <property type="evidence" value="ECO:0007669"/>
    <property type="project" value="UniProtKB-EC"/>
</dbReference>
<dbReference type="GO" id="GO:0016301">
    <property type="term" value="F:kinase activity"/>
    <property type="evidence" value="ECO:0007669"/>
    <property type="project" value="UniProtKB-KW"/>
</dbReference>
<dbReference type="GO" id="GO:0046872">
    <property type="term" value="F:metal ion binding"/>
    <property type="evidence" value="ECO:0007669"/>
    <property type="project" value="UniProtKB-KW"/>
</dbReference>
<dbReference type="GO" id="GO:0046656">
    <property type="term" value="P:folic acid biosynthetic process"/>
    <property type="evidence" value="ECO:0007669"/>
    <property type="project" value="UniProtKB-KW"/>
</dbReference>
<dbReference type="GO" id="GO:0046654">
    <property type="term" value="P:tetrahydrofolate biosynthetic process"/>
    <property type="evidence" value="ECO:0007669"/>
    <property type="project" value="UniProtKB-UniPathway"/>
</dbReference>
<dbReference type="CDD" id="cd00534">
    <property type="entry name" value="DHNA_DHNTPE"/>
    <property type="match status" value="1"/>
</dbReference>
<dbReference type="CDD" id="cd00483">
    <property type="entry name" value="HPPK"/>
    <property type="match status" value="1"/>
</dbReference>
<dbReference type="Gene3D" id="3.30.1130.10">
    <property type="match status" value="1"/>
</dbReference>
<dbReference type="Gene3D" id="3.30.70.560">
    <property type="entry name" value="7,8-Dihydro-6-hydroxymethylpterin-pyrophosphokinase HPPK"/>
    <property type="match status" value="1"/>
</dbReference>
<dbReference type="InterPro" id="IPR006156">
    <property type="entry name" value="Dihydroneopterin_aldolase"/>
</dbReference>
<dbReference type="InterPro" id="IPR006157">
    <property type="entry name" value="FolB_dom"/>
</dbReference>
<dbReference type="InterPro" id="IPR043133">
    <property type="entry name" value="GTP-CH-I_C/QueF"/>
</dbReference>
<dbReference type="InterPro" id="IPR000550">
    <property type="entry name" value="Hppk"/>
</dbReference>
<dbReference type="InterPro" id="IPR035907">
    <property type="entry name" value="Hppk_sf"/>
</dbReference>
<dbReference type="NCBIfam" id="TIGR00525">
    <property type="entry name" value="folB"/>
    <property type="match status" value="1"/>
</dbReference>
<dbReference type="NCBIfam" id="TIGR00526">
    <property type="entry name" value="folB_dom"/>
    <property type="match status" value="1"/>
</dbReference>
<dbReference type="NCBIfam" id="TIGR01498">
    <property type="entry name" value="folK"/>
    <property type="match status" value="1"/>
</dbReference>
<dbReference type="PANTHER" id="PTHR43071">
    <property type="entry name" value="2-AMINO-4-HYDROXY-6-HYDROXYMETHYLDIHYDROPTERIDINE PYROPHOSPHOKINASE"/>
    <property type="match status" value="1"/>
</dbReference>
<dbReference type="PANTHER" id="PTHR43071:SF1">
    <property type="entry name" value="2-AMINO-4-HYDROXY-6-HYDROXYMETHYLDIHYDROPTERIDINE PYROPHOSPHOKINASE"/>
    <property type="match status" value="1"/>
</dbReference>
<dbReference type="Pfam" id="PF02152">
    <property type="entry name" value="FolB"/>
    <property type="match status" value="1"/>
</dbReference>
<dbReference type="Pfam" id="PF01288">
    <property type="entry name" value="HPPK"/>
    <property type="match status" value="1"/>
</dbReference>
<dbReference type="SMART" id="SM00905">
    <property type="entry name" value="FolB"/>
    <property type="match status" value="1"/>
</dbReference>
<dbReference type="SUPFAM" id="SSF55083">
    <property type="entry name" value="6-hydroxymethyl-7,8-dihydropterin pyrophosphokinase, HPPK"/>
    <property type="match status" value="1"/>
</dbReference>
<dbReference type="SUPFAM" id="SSF55620">
    <property type="entry name" value="Tetrahydrobiopterin biosynthesis enzymes-like"/>
    <property type="match status" value="1"/>
</dbReference>
<dbReference type="PROSITE" id="PS00794">
    <property type="entry name" value="HPPK"/>
    <property type="match status" value="1"/>
</dbReference>
<feature type="chain" id="PRO_0000168244" description="Bifunctional folate synthesis protein">
    <location>
        <begin position="1"/>
        <end position="270"/>
    </location>
</feature>
<feature type="region of interest" description="DHNA">
    <location>
        <begin position="1"/>
        <end position="119"/>
    </location>
</feature>
<feature type="region of interest" description="HPPK">
    <location>
        <begin position="120"/>
        <end position="270"/>
    </location>
</feature>
<feature type="active site" description="Proton donor/acceptor; for DHNA activity" evidence="1">
    <location>
        <position position="99"/>
    </location>
</feature>
<feature type="binding site" evidence="1">
    <location>
        <position position="21"/>
    </location>
    <ligand>
        <name>substrate</name>
    </ligand>
</feature>
<feature type="binding site" evidence="1">
    <location>
        <position position="53"/>
    </location>
    <ligand>
        <name>substrate</name>
    </ligand>
</feature>
<feature type="binding site" evidence="1">
    <location>
        <begin position="72"/>
        <end position="73"/>
    </location>
    <ligand>
        <name>substrate</name>
    </ligand>
</feature>
<feature type="binding site" evidence="2">
    <location>
        <begin position="160"/>
        <end position="163"/>
    </location>
    <ligand>
        <name>ATP</name>
        <dbReference type="ChEBI" id="CHEBI:30616"/>
    </ligand>
</feature>
<feature type="binding site" evidence="2">
    <location>
        <begin position="171"/>
        <end position="173"/>
    </location>
    <ligand>
        <name>ATP</name>
        <dbReference type="ChEBI" id="CHEBI:30616"/>
    </ligand>
</feature>
<feature type="binding site" evidence="2">
    <location>
        <begin position="192"/>
        <end position="195"/>
    </location>
    <ligand>
        <name>ATP</name>
        <dbReference type="ChEBI" id="CHEBI:30616"/>
    </ligand>
</feature>
<feature type="binding site" evidence="2">
    <location>
        <begin position="200"/>
        <end position="215"/>
    </location>
    <ligand>
        <name>ATP</name>
        <dbReference type="ChEBI" id="CHEBI:30616"/>
    </ligand>
</feature>
<feature type="binding site" evidence="2">
    <location>
        <position position="212"/>
    </location>
    <ligand>
        <name>Mg(2+)</name>
        <dbReference type="ChEBI" id="CHEBI:18420"/>
        <label>1</label>
    </ligand>
</feature>
<feature type="binding site" evidence="2">
    <location>
        <position position="212"/>
    </location>
    <ligand>
        <name>Mg(2+)</name>
        <dbReference type="ChEBI" id="CHEBI:18420"/>
        <label>2</label>
    </ligand>
</feature>
<feature type="binding site" evidence="2">
    <location>
        <position position="214"/>
    </location>
    <ligand>
        <name>Mg(2+)</name>
        <dbReference type="ChEBI" id="CHEBI:18420"/>
        <label>1</label>
    </ligand>
</feature>
<feature type="binding site" evidence="2">
    <location>
        <position position="214"/>
    </location>
    <ligand>
        <name>Mg(2+)</name>
        <dbReference type="ChEBI" id="CHEBI:18420"/>
        <label>2</label>
    </ligand>
</feature>
<feature type="binding site" evidence="2">
    <location>
        <begin position="227"/>
        <end position="233"/>
    </location>
    <ligand>
        <name>ATP</name>
        <dbReference type="ChEBI" id="CHEBI:30616"/>
    </ligand>
</feature>
<feature type="binding site" evidence="2">
    <location>
        <begin position="238"/>
        <end position="240"/>
    </location>
    <ligand>
        <name>ATP</name>
        <dbReference type="ChEBI" id="CHEBI:30616"/>
    </ligand>
</feature>
<feature type="sequence conflict" description="In Ref. 1; AAB63947." evidence="7" ref="1">
    <original>V</original>
    <variation>I</variation>
    <location>
        <position position="29"/>
    </location>
</feature>
<feature type="sequence conflict" description="In Ref. 1; AAB63947." evidence="7" ref="1">
    <original>F</original>
    <variation>S</variation>
    <location>
        <position position="86"/>
    </location>
</feature>
<accession>P22291</accession>
<accession>O33697</accession>
<proteinExistence type="evidence at protein level"/>
<reference key="1">
    <citation type="journal article" date="1990" name="J. Bacteriol.">
        <title>DNA sequence of folate biosynthesis gene sulD, encoding hydroxymethyldihydropterin pyrophosphokinase in Streptococcus pneumoniae, and characterization of the enzyme.</title>
        <authorList>
            <person name="Lopez P."/>
            <person name="Greenberg B."/>
            <person name="Lacks S.A."/>
        </authorList>
    </citation>
    <scope>NUCLEOTIDE SEQUENCE [GENOMIC DNA]</scope>
    <scope>PROTEIN SEQUENCE OF 1-13</scope>
    <scope>CATALYTIC ACTIVITY</scope>
    <scope>SUBUNIT</scope>
    <source>
        <strain>708</strain>
    </source>
</reference>
<reference key="2">
    <citation type="journal article" date="1995" name="J. Bacteriol.">
        <title>A cluster of four genes encoding enzymes for five steps in the folate biosynthetic pathway of Streptococcus pneumoniae.</title>
        <authorList>
            <person name="Lacks S.A."/>
            <person name="Greenberg B."/>
            <person name="Lopez P."/>
        </authorList>
    </citation>
    <scope>SEQUENCE REVISION TO 156-170</scope>
    <source>
        <strain>772</strain>
    </source>
</reference>
<reference key="3">
    <citation type="journal article" date="2001" name="Science">
        <title>Complete genome sequence of a virulent isolate of Streptococcus pneumoniae.</title>
        <authorList>
            <person name="Tettelin H."/>
            <person name="Nelson K.E."/>
            <person name="Paulsen I.T."/>
            <person name="Eisen J.A."/>
            <person name="Read T.D."/>
            <person name="Peterson S.N."/>
            <person name="Heidelberg J.F."/>
            <person name="DeBoy R.T."/>
            <person name="Haft D.H."/>
            <person name="Dodson R.J."/>
            <person name="Durkin A.S."/>
            <person name="Gwinn M.L."/>
            <person name="Kolonay J.F."/>
            <person name="Nelson W.C."/>
            <person name="Peterson J.D."/>
            <person name="Umayam L.A."/>
            <person name="White O."/>
            <person name="Salzberg S.L."/>
            <person name="Lewis M.R."/>
            <person name="Radune D."/>
            <person name="Holtzapple E.K."/>
            <person name="Khouri H.M."/>
            <person name="Wolf A.M."/>
            <person name="Utterback T.R."/>
            <person name="Hansen C.L."/>
            <person name="McDonald L.A."/>
            <person name="Feldblyum T.V."/>
            <person name="Angiuoli S.V."/>
            <person name="Dickinson T."/>
            <person name="Hickey E.K."/>
            <person name="Holt I.E."/>
            <person name="Loftus B.J."/>
            <person name="Yang F."/>
            <person name="Smith H.O."/>
            <person name="Venter J.C."/>
            <person name="Dougherty B.A."/>
            <person name="Morrison D.A."/>
            <person name="Hollingshead S.K."/>
            <person name="Fraser C.M."/>
        </authorList>
    </citation>
    <scope>NUCLEOTIDE SEQUENCE [LARGE SCALE GENOMIC DNA]</scope>
    <source>
        <strain>ATCC BAA-334 / TIGR4</strain>
    </source>
</reference>
<reference key="4">
    <citation type="journal article" date="1993" name="J. Bacteriol.">
        <title>A bifunctional protein in the folate biosynthetic pathway of Streptococcus pneumoniae with dihydroneopterin aldolase and hydroxymethyldihydropterin pyrophosphokinase activities.</title>
        <authorList>
            <person name="Lopez P."/>
            <person name="Lacks S.A."/>
        </authorList>
    </citation>
    <scope>FUNCTION</scope>
    <scope>CATALYTIC ACTIVITY</scope>
    <scope>SUBUNIT</scope>
    <scope>CHARACTERIZATION</scope>
</reference>
<name>SULD_STRPN</name>
<comment type="function">
    <text evidence="4">Catalyzes two sequential steps of tetrahydrofolate biosynthesis, the conversion of 7,8-dihydroneopterin to 6-hydroxymethyl-7,8-dihydropterin diphosphate.</text>
</comment>
<comment type="catalytic activity">
    <reaction evidence="4">
        <text>7,8-dihydroneopterin = 6-hydroxymethyl-7,8-dihydropterin + glycolaldehyde</text>
        <dbReference type="Rhea" id="RHEA:10540"/>
        <dbReference type="ChEBI" id="CHEBI:17001"/>
        <dbReference type="ChEBI" id="CHEBI:17071"/>
        <dbReference type="ChEBI" id="CHEBI:44841"/>
        <dbReference type="EC" id="4.1.2.25"/>
    </reaction>
</comment>
<comment type="catalytic activity">
    <reaction evidence="3 4">
        <text>6-hydroxymethyl-7,8-dihydropterin + ATP = (7,8-dihydropterin-6-yl)methyl diphosphate + AMP + H(+)</text>
        <dbReference type="Rhea" id="RHEA:11412"/>
        <dbReference type="ChEBI" id="CHEBI:15378"/>
        <dbReference type="ChEBI" id="CHEBI:30616"/>
        <dbReference type="ChEBI" id="CHEBI:44841"/>
        <dbReference type="ChEBI" id="CHEBI:72950"/>
        <dbReference type="ChEBI" id="CHEBI:456215"/>
        <dbReference type="EC" id="2.7.6.3"/>
    </reaction>
</comment>
<comment type="pathway">
    <text>Cofactor biosynthesis; tetrahydrofolate biosynthesis; 2-amino-4-hydroxy-6-hydroxymethyl-7,8-dihydropteridine diphosphate from 7,8-dihydroneopterin triphosphate: step 3/4.</text>
</comment>
<comment type="pathway">
    <text>Cofactor biosynthesis; tetrahydrofolate biosynthesis; 2-amino-4-hydroxy-6-hydroxymethyl-7,8-dihydropteridine diphosphate from 7,8-dihydroneopterin triphosphate: step 4/4.</text>
</comment>
<comment type="subunit">
    <text evidence="3 4">Homotrimer or homotetramer.</text>
</comment>
<comment type="interaction">
    <interactant intactId="EBI-2207011">
        <id>P22291</id>
    </interactant>
    <interactant intactId="EBI-2206949">
        <id>Q97NV3</id>
        <label>groES</label>
    </interactant>
    <organismsDiffer>false</organismsDiffer>
    <experiments>2</experiments>
</comment>
<comment type="similarity">
    <text evidence="7">In the N-terminal section; belongs to the DHNA family.</text>
</comment>
<comment type="similarity">
    <text evidence="7">In the C-terminal section; belongs to the HPPK family.</text>
</comment>
<organism>
    <name type="scientific">Streptococcus pneumoniae serotype 4 (strain ATCC BAA-334 / TIGR4)</name>
    <dbReference type="NCBI Taxonomy" id="170187"/>
    <lineage>
        <taxon>Bacteria</taxon>
        <taxon>Bacillati</taxon>
        <taxon>Bacillota</taxon>
        <taxon>Bacilli</taxon>
        <taxon>Lactobacillales</taxon>
        <taxon>Streptococcaceae</taxon>
        <taxon>Streptococcus</taxon>
    </lineage>
</organism>
<sequence length="270" mass="31143">MDQLQIKDLEMFAYHGLFPSEKELGQKFVVSAILSYDMTKAATDLDLTASVHYGELCQQWTTWFQETSEDLIETVAYKLVERTFEFYPLVQEMKLELKKPWAPVHLSLDTCSVTIHRRKQRAFIALGSNMGDKQANLKQAIDKLRARGIHILKESSVLATEPWGGVEQDSFANQVVEVETWLPAQDLLETLLAIESELGRVREVHWGPRLIDLDLLFVEDQILYTDDLILPHPYIAERLFVLESLQEIAPHFIHPILKQPIRNLYDALKK</sequence>
<gene>
    <name evidence="5" type="primary">sulD</name>
    <name type="ordered locus">SP_0292</name>
</gene>